<protein>
    <recommendedName>
        <fullName evidence="1">Ribosomal protein uS12 methylthiotransferase RimO</fullName>
        <shortName evidence="1">uS12 MTTase</shortName>
        <shortName evidence="1">uS12 methylthiotransferase</shortName>
        <ecNumber evidence="1">2.8.4.4</ecNumber>
    </recommendedName>
    <alternativeName>
        <fullName evidence="1">Ribosomal protein uS12 (aspartate-C(3))-methylthiotransferase</fullName>
    </alternativeName>
    <alternativeName>
        <fullName evidence="1">Ribosome maturation factor RimO</fullName>
    </alternativeName>
</protein>
<dbReference type="EC" id="2.8.4.4" evidence="1"/>
<dbReference type="EMBL" id="CP001068">
    <property type="protein sequence ID" value="ACD27046.1"/>
    <property type="molecule type" value="Genomic_DNA"/>
</dbReference>
<dbReference type="SMR" id="B2UFU5"/>
<dbReference type="STRING" id="402626.Rpic_1911"/>
<dbReference type="KEGG" id="rpi:Rpic_1911"/>
<dbReference type="PATRIC" id="fig|402626.5.peg.3063"/>
<dbReference type="eggNOG" id="COG0621">
    <property type="taxonomic scope" value="Bacteria"/>
</dbReference>
<dbReference type="HOGENOM" id="CLU_018697_0_0_4"/>
<dbReference type="GO" id="GO:0005829">
    <property type="term" value="C:cytosol"/>
    <property type="evidence" value="ECO:0007669"/>
    <property type="project" value="TreeGrafter"/>
</dbReference>
<dbReference type="GO" id="GO:0051539">
    <property type="term" value="F:4 iron, 4 sulfur cluster binding"/>
    <property type="evidence" value="ECO:0007669"/>
    <property type="project" value="UniProtKB-UniRule"/>
</dbReference>
<dbReference type="GO" id="GO:0035599">
    <property type="term" value="F:aspartic acid methylthiotransferase activity"/>
    <property type="evidence" value="ECO:0007669"/>
    <property type="project" value="TreeGrafter"/>
</dbReference>
<dbReference type="GO" id="GO:0046872">
    <property type="term" value="F:metal ion binding"/>
    <property type="evidence" value="ECO:0007669"/>
    <property type="project" value="UniProtKB-KW"/>
</dbReference>
<dbReference type="GO" id="GO:0103039">
    <property type="term" value="F:protein methylthiotransferase activity"/>
    <property type="evidence" value="ECO:0007669"/>
    <property type="project" value="UniProtKB-EC"/>
</dbReference>
<dbReference type="GO" id="GO:0006400">
    <property type="term" value="P:tRNA modification"/>
    <property type="evidence" value="ECO:0007669"/>
    <property type="project" value="InterPro"/>
</dbReference>
<dbReference type="CDD" id="cd01335">
    <property type="entry name" value="Radical_SAM"/>
    <property type="match status" value="1"/>
</dbReference>
<dbReference type="FunFam" id="3.40.50.12160:FF:000002">
    <property type="entry name" value="Ribosomal protein S12 methylthiotransferase RimO"/>
    <property type="match status" value="1"/>
</dbReference>
<dbReference type="FunFam" id="3.80.30.20:FF:000001">
    <property type="entry name" value="tRNA-2-methylthio-N(6)-dimethylallyladenosine synthase 2"/>
    <property type="match status" value="1"/>
</dbReference>
<dbReference type="Gene3D" id="3.40.50.12160">
    <property type="entry name" value="Methylthiotransferase, N-terminal domain"/>
    <property type="match status" value="1"/>
</dbReference>
<dbReference type="Gene3D" id="2.40.50.140">
    <property type="entry name" value="Nucleic acid-binding proteins"/>
    <property type="match status" value="1"/>
</dbReference>
<dbReference type="Gene3D" id="3.80.30.20">
    <property type="entry name" value="tm_1862 like domain"/>
    <property type="match status" value="1"/>
</dbReference>
<dbReference type="HAMAP" id="MF_01865">
    <property type="entry name" value="MTTase_RimO"/>
    <property type="match status" value="1"/>
</dbReference>
<dbReference type="InterPro" id="IPR006638">
    <property type="entry name" value="Elp3/MiaA/NifB-like_rSAM"/>
</dbReference>
<dbReference type="InterPro" id="IPR005839">
    <property type="entry name" value="Methylthiotransferase"/>
</dbReference>
<dbReference type="InterPro" id="IPR020612">
    <property type="entry name" value="Methylthiotransferase_CS"/>
</dbReference>
<dbReference type="InterPro" id="IPR013848">
    <property type="entry name" value="Methylthiotransferase_N"/>
</dbReference>
<dbReference type="InterPro" id="IPR038135">
    <property type="entry name" value="Methylthiotransferase_N_sf"/>
</dbReference>
<dbReference type="InterPro" id="IPR012340">
    <property type="entry name" value="NA-bd_OB-fold"/>
</dbReference>
<dbReference type="InterPro" id="IPR005840">
    <property type="entry name" value="Ribosomal_uS12_MeSTrfase_RimO"/>
</dbReference>
<dbReference type="InterPro" id="IPR007197">
    <property type="entry name" value="rSAM"/>
</dbReference>
<dbReference type="InterPro" id="IPR023404">
    <property type="entry name" value="rSAM_horseshoe"/>
</dbReference>
<dbReference type="InterPro" id="IPR002792">
    <property type="entry name" value="TRAM_dom"/>
</dbReference>
<dbReference type="NCBIfam" id="TIGR01125">
    <property type="entry name" value="30S ribosomal protein S12 methylthiotransferase RimO"/>
    <property type="match status" value="1"/>
</dbReference>
<dbReference type="NCBIfam" id="TIGR00089">
    <property type="entry name" value="MiaB/RimO family radical SAM methylthiotransferase"/>
    <property type="match status" value="1"/>
</dbReference>
<dbReference type="PANTHER" id="PTHR43837">
    <property type="entry name" value="RIBOSOMAL PROTEIN S12 METHYLTHIOTRANSFERASE RIMO"/>
    <property type="match status" value="1"/>
</dbReference>
<dbReference type="PANTHER" id="PTHR43837:SF1">
    <property type="entry name" value="RIBOSOMAL PROTEIN US12 METHYLTHIOTRANSFERASE RIMO"/>
    <property type="match status" value="1"/>
</dbReference>
<dbReference type="Pfam" id="PF04055">
    <property type="entry name" value="Radical_SAM"/>
    <property type="match status" value="1"/>
</dbReference>
<dbReference type="Pfam" id="PF18693">
    <property type="entry name" value="TRAM_2"/>
    <property type="match status" value="1"/>
</dbReference>
<dbReference type="Pfam" id="PF00919">
    <property type="entry name" value="UPF0004"/>
    <property type="match status" value="1"/>
</dbReference>
<dbReference type="SFLD" id="SFLDG01082">
    <property type="entry name" value="B12-binding_domain_containing"/>
    <property type="match status" value="1"/>
</dbReference>
<dbReference type="SFLD" id="SFLDS00029">
    <property type="entry name" value="Radical_SAM"/>
    <property type="match status" value="1"/>
</dbReference>
<dbReference type="SFLD" id="SFLDF00274">
    <property type="entry name" value="ribosomal_protein_S12_methylth"/>
    <property type="match status" value="1"/>
</dbReference>
<dbReference type="SMART" id="SM00729">
    <property type="entry name" value="Elp3"/>
    <property type="match status" value="1"/>
</dbReference>
<dbReference type="SUPFAM" id="SSF102114">
    <property type="entry name" value="Radical SAM enzymes"/>
    <property type="match status" value="1"/>
</dbReference>
<dbReference type="PROSITE" id="PS51449">
    <property type="entry name" value="MTTASE_N"/>
    <property type="match status" value="1"/>
</dbReference>
<dbReference type="PROSITE" id="PS01278">
    <property type="entry name" value="MTTASE_RADICAL"/>
    <property type="match status" value="1"/>
</dbReference>
<dbReference type="PROSITE" id="PS51918">
    <property type="entry name" value="RADICAL_SAM"/>
    <property type="match status" value="1"/>
</dbReference>
<dbReference type="PROSITE" id="PS50926">
    <property type="entry name" value="TRAM"/>
    <property type="match status" value="1"/>
</dbReference>
<organism>
    <name type="scientific">Ralstonia pickettii (strain 12J)</name>
    <dbReference type="NCBI Taxonomy" id="402626"/>
    <lineage>
        <taxon>Bacteria</taxon>
        <taxon>Pseudomonadati</taxon>
        <taxon>Pseudomonadota</taxon>
        <taxon>Betaproteobacteria</taxon>
        <taxon>Burkholderiales</taxon>
        <taxon>Burkholderiaceae</taxon>
        <taxon>Ralstonia</taxon>
    </lineage>
</organism>
<name>RIMO_RALPJ</name>
<evidence type="ECO:0000255" key="1">
    <source>
        <dbReference type="HAMAP-Rule" id="MF_01865"/>
    </source>
</evidence>
<evidence type="ECO:0000255" key="2">
    <source>
        <dbReference type="PROSITE-ProRule" id="PRU01266"/>
    </source>
</evidence>
<sequence>MSDVSTQSPKVGFVSLGCPKALVDSEQIITQLRAEGYEISGTYGGADLVVVNTCGFIDEAVQESLDAIGEALAENGKVIVTGCLGAKKDASGQDIITSVHPKVLAVTGPHALGEVMEAVHTHLPKPHDPFIDLVPPQGIKLTPKHYAYLKISEGCNHRCSFCIIPSMRGDLVSRPVAEVMLEAENLLKAGVKELLVISQDTSAYGVDVKFRMGFWNGRPLKTRMTELVGALGELASQYGAWVRLHYVYPYPSVDEVMPLMAEGKVLPYLDVPLQHAHPDVLKRMKRPANAEKTLDRIRAWREVCPELTIRSTFIAGFPGETEEEFQTLLDFIAEAELDRVGCFAYSPVEGATANDLPGALPDEVREERRARFMEVAERVSARGLQRKVGKSLRVLVDEVNQDGGIGRSSADAPEIDGLVYIAPPSKPYKRYKAGDFVSVKITGADGHDLWGEV</sequence>
<gene>
    <name evidence="1" type="primary">rimO</name>
    <name type="ordered locus">Rpic_1911</name>
</gene>
<keyword id="KW-0004">4Fe-4S</keyword>
<keyword id="KW-0963">Cytoplasm</keyword>
<keyword id="KW-0408">Iron</keyword>
<keyword id="KW-0411">Iron-sulfur</keyword>
<keyword id="KW-0479">Metal-binding</keyword>
<keyword id="KW-0949">S-adenosyl-L-methionine</keyword>
<keyword id="KW-0808">Transferase</keyword>
<comment type="function">
    <text evidence="1">Catalyzes the methylthiolation of an aspartic acid residue of ribosomal protein uS12.</text>
</comment>
<comment type="catalytic activity">
    <reaction evidence="1">
        <text>L-aspartate(89)-[ribosomal protein uS12]-hydrogen + (sulfur carrier)-SH + AH2 + 2 S-adenosyl-L-methionine = 3-methylsulfanyl-L-aspartate(89)-[ribosomal protein uS12]-hydrogen + (sulfur carrier)-H + 5'-deoxyadenosine + L-methionine + A + S-adenosyl-L-homocysteine + 2 H(+)</text>
        <dbReference type="Rhea" id="RHEA:37087"/>
        <dbReference type="Rhea" id="RHEA-COMP:10460"/>
        <dbReference type="Rhea" id="RHEA-COMP:10461"/>
        <dbReference type="Rhea" id="RHEA-COMP:14737"/>
        <dbReference type="Rhea" id="RHEA-COMP:14739"/>
        <dbReference type="ChEBI" id="CHEBI:13193"/>
        <dbReference type="ChEBI" id="CHEBI:15378"/>
        <dbReference type="ChEBI" id="CHEBI:17319"/>
        <dbReference type="ChEBI" id="CHEBI:17499"/>
        <dbReference type="ChEBI" id="CHEBI:29917"/>
        <dbReference type="ChEBI" id="CHEBI:29961"/>
        <dbReference type="ChEBI" id="CHEBI:57844"/>
        <dbReference type="ChEBI" id="CHEBI:57856"/>
        <dbReference type="ChEBI" id="CHEBI:59789"/>
        <dbReference type="ChEBI" id="CHEBI:64428"/>
        <dbReference type="ChEBI" id="CHEBI:73599"/>
        <dbReference type="EC" id="2.8.4.4"/>
    </reaction>
</comment>
<comment type="cofactor">
    <cofactor evidence="1">
        <name>[4Fe-4S] cluster</name>
        <dbReference type="ChEBI" id="CHEBI:49883"/>
    </cofactor>
    <text evidence="1">Binds 2 [4Fe-4S] clusters. One cluster is coordinated with 3 cysteines and an exchangeable S-adenosyl-L-methionine.</text>
</comment>
<comment type="subcellular location">
    <subcellularLocation>
        <location evidence="1">Cytoplasm</location>
    </subcellularLocation>
</comment>
<comment type="similarity">
    <text evidence="1">Belongs to the methylthiotransferase family. RimO subfamily.</text>
</comment>
<reference key="1">
    <citation type="submission" date="2008-05" db="EMBL/GenBank/DDBJ databases">
        <title>Complete sequence of chromosome 1 of Ralstonia pickettii 12J.</title>
        <authorList>
            <person name="Lucas S."/>
            <person name="Copeland A."/>
            <person name="Lapidus A."/>
            <person name="Glavina del Rio T."/>
            <person name="Dalin E."/>
            <person name="Tice H."/>
            <person name="Bruce D."/>
            <person name="Goodwin L."/>
            <person name="Pitluck S."/>
            <person name="Meincke L."/>
            <person name="Brettin T."/>
            <person name="Detter J.C."/>
            <person name="Han C."/>
            <person name="Kuske C.R."/>
            <person name="Schmutz J."/>
            <person name="Larimer F."/>
            <person name="Land M."/>
            <person name="Hauser L."/>
            <person name="Kyrpides N."/>
            <person name="Mikhailova N."/>
            <person name="Marsh T."/>
            <person name="Richardson P."/>
        </authorList>
    </citation>
    <scope>NUCLEOTIDE SEQUENCE [LARGE SCALE GENOMIC DNA]</scope>
    <source>
        <strain>12J</strain>
    </source>
</reference>
<feature type="chain" id="PRO_0000374962" description="Ribosomal protein uS12 methylthiotransferase RimO">
    <location>
        <begin position="1"/>
        <end position="453"/>
    </location>
</feature>
<feature type="domain" description="MTTase N-terminal" evidence="1">
    <location>
        <begin position="9"/>
        <end position="124"/>
    </location>
</feature>
<feature type="domain" description="Radical SAM core" evidence="2">
    <location>
        <begin position="141"/>
        <end position="382"/>
    </location>
</feature>
<feature type="domain" description="TRAM" evidence="1">
    <location>
        <begin position="385"/>
        <end position="453"/>
    </location>
</feature>
<feature type="binding site" evidence="1">
    <location>
        <position position="18"/>
    </location>
    <ligand>
        <name>[4Fe-4S] cluster</name>
        <dbReference type="ChEBI" id="CHEBI:49883"/>
        <label>1</label>
    </ligand>
</feature>
<feature type="binding site" evidence="1">
    <location>
        <position position="54"/>
    </location>
    <ligand>
        <name>[4Fe-4S] cluster</name>
        <dbReference type="ChEBI" id="CHEBI:49883"/>
        <label>1</label>
    </ligand>
</feature>
<feature type="binding site" evidence="1">
    <location>
        <position position="83"/>
    </location>
    <ligand>
        <name>[4Fe-4S] cluster</name>
        <dbReference type="ChEBI" id="CHEBI:49883"/>
        <label>1</label>
    </ligand>
</feature>
<feature type="binding site" evidence="1">
    <location>
        <position position="155"/>
    </location>
    <ligand>
        <name>[4Fe-4S] cluster</name>
        <dbReference type="ChEBI" id="CHEBI:49883"/>
        <label>2</label>
        <note>4Fe-4S-S-AdoMet</note>
    </ligand>
</feature>
<feature type="binding site" evidence="1">
    <location>
        <position position="159"/>
    </location>
    <ligand>
        <name>[4Fe-4S] cluster</name>
        <dbReference type="ChEBI" id="CHEBI:49883"/>
        <label>2</label>
        <note>4Fe-4S-S-AdoMet</note>
    </ligand>
</feature>
<feature type="binding site" evidence="1">
    <location>
        <position position="162"/>
    </location>
    <ligand>
        <name>[4Fe-4S] cluster</name>
        <dbReference type="ChEBI" id="CHEBI:49883"/>
        <label>2</label>
        <note>4Fe-4S-S-AdoMet</note>
    </ligand>
</feature>
<proteinExistence type="inferred from homology"/>
<accession>B2UFU5</accession>